<sequence>MSRTVFCQHLNKEADGLDFQLYPGELGKKIFDNISKEAWTEWQKKQTMLINEKKLNMMEPTARNFLETQMQAYLFEGKEPDIEGYVPPKS</sequence>
<evidence type="ECO:0000255" key="1">
    <source>
        <dbReference type="HAMAP-Rule" id="MF_00686"/>
    </source>
</evidence>
<dbReference type="EMBL" id="CP000388">
    <property type="protein sequence ID" value="ABG38607.1"/>
    <property type="molecule type" value="Genomic_DNA"/>
</dbReference>
<dbReference type="RefSeq" id="WP_011573017.1">
    <property type="nucleotide sequence ID" value="NC_008228.1"/>
</dbReference>
<dbReference type="SMR" id="Q15ZT1"/>
<dbReference type="STRING" id="342610.Patl_0075"/>
<dbReference type="KEGG" id="pat:Patl_0075"/>
<dbReference type="eggNOG" id="COG2924">
    <property type="taxonomic scope" value="Bacteria"/>
</dbReference>
<dbReference type="HOGENOM" id="CLU_170994_0_0_6"/>
<dbReference type="OrthoDB" id="9804318at2"/>
<dbReference type="Proteomes" id="UP000001981">
    <property type="component" value="Chromosome"/>
</dbReference>
<dbReference type="GO" id="GO:0005829">
    <property type="term" value="C:cytosol"/>
    <property type="evidence" value="ECO:0007669"/>
    <property type="project" value="TreeGrafter"/>
</dbReference>
<dbReference type="GO" id="GO:0005506">
    <property type="term" value="F:iron ion binding"/>
    <property type="evidence" value="ECO:0007669"/>
    <property type="project" value="UniProtKB-UniRule"/>
</dbReference>
<dbReference type="GO" id="GO:0034599">
    <property type="term" value="P:cellular response to oxidative stress"/>
    <property type="evidence" value="ECO:0007669"/>
    <property type="project" value="TreeGrafter"/>
</dbReference>
<dbReference type="FunFam" id="1.10.3880.10:FF:000001">
    <property type="entry name" value="Probable Fe(2+)-trafficking protein"/>
    <property type="match status" value="1"/>
</dbReference>
<dbReference type="Gene3D" id="1.10.3880.10">
    <property type="entry name" value="Fe(II) trafficking protein YggX"/>
    <property type="match status" value="1"/>
</dbReference>
<dbReference type="HAMAP" id="MF_00686">
    <property type="entry name" value="Fe_traffic_YggX"/>
    <property type="match status" value="1"/>
</dbReference>
<dbReference type="InterPro" id="IPR007457">
    <property type="entry name" value="Fe_traffick_prot_YggX"/>
</dbReference>
<dbReference type="InterPro" id="IPR036766">
    <property type="entry name" value="Fe_traffick_prot_YggX_sf"/>
</dbReference>
<dbReference type="NCBIfam" id="NF003817">
    <property type="entry name" value="PRK05408.1"/>
    <property type="match status" value="1"/>
</dbReference>
<dbReference type="PANTHER" id="PTHR36965">
    <property type="entry name" value="FE(2+)-TRAFFICKING PROTEIN-RELATED"/>
    <property type="match status" value="1"/>
</dbReference>
<dbReference type="PANTHER" id="PTHR36965:SF1">
    <property type="entry name" value="FE(2+)-TRAFFICKING PROTEIN-RELATED"/>
    <property type="match status" value="1"/>
</dbReference>
<dbReference type="Pfam" id="PF04362">
    <property type="entry name" value="Iron_traffic"/>
    <property type="match status" value="1"/>
</dbReference>
<dbReference type="PIRSF" id="PIRSF029827">
    <property type="entry name" value="Fe_traffic_YggX"/>
    <property type="match status" value="1"/>
</dbReference>
<dbReference type="SUPFAM" id="SSF111148">
    <property type="entry name" value="YggX-like"/>
    <property type="match status" value="1"/>
</dbReference>
<accession>Q15ZT1</accession>
<organism>
    <name type="scientific">Pseudoalteromonas atlantica (strain T6c / ATCC BAA-1087)</name>
    <dbReference type="NCBI Taxonomy" id="3042615"/>
    <lineage>
        <taxon>Bacteria</taxon>
        <taxon>Pseudomonadati</taxon>
        <taxon>Pseudomonadota</taxon>
        <taxon>Gammaproteobacteria</taxon>
        <taxon>Alteromonadales</taxon>
        <taxon>Alteromonadaceae</taxon>
        <taxon>Paraglaciecola</taxon>
    </lineage>
</organism>
<keyword id="KW-0408">Iron</keyword>
<name>FETP_PSEA6</name>
<gene>
    <name type="ordered locus">Patl_0075</name>
</gene>
<feature type="chain" id="PRO_1000045051" description="Probable Fe(2+)-trafficking protein">
    <location>
        <begin position="1"/>
        <end position="90"/>
    </location>
</feature>
<proteinExistence type="inferred from homology"/>
<reference key="1">
    <citation type="submission" date="2006-06" db="EMBL/GenBank/DDBJ databases">
        <title>Complete sequence of Pseudoalteromonas atlantica T6c.</title>
        <authorList>
            <consortium name="US DOE Joint Genome Institute"/>
            <person name="Copeland A."/>
            <person name="Lucas S."/>
            <person name="Lapidus A."/>
            <person name="Barry K."/>
            <person name="Detter J.C."/>
            <person name="Glavina del Rio T."/>
            <person name="Hammon N."/>
            <person name="Israni S."/>
            <person name="Dalin E."/>
            <person name="Tice H."/>
            <person name="Pitluck S."/>
            <person name="Saunders E."/>
            <person name="Brettin T."/>
            <person name="Bruce D."/>
            <person name="Han C."/>
            <person name="Tapia R."/>
            <person name="Gilna P."/>
            <person name="Schmutz J."/>
            <person name="Larimer F."/>
            <person name="Land M."/>
            <person name="Hauser L."/>
            <person name="Kyrpides N."/>
            <person name="Kim E."/>
            <person name="Karls A.C."/>
            <person name="Bartlett D."/>
            <person name="Higgins B.P."/>
            <person name="Richardson P."/>
        </authorList>
    </citation>
    <scope>NUCLEOTIDE SEQUENCE [LARGE SCALE GENOMIC DNA]</scope>
    <source>
        <strain>T6c / ATCC BAA-1087</strain>
    </source>
</reference>
<comment type="function">
    <text evidence="1">Could be a mediator in iron transactions between iron acquisition and iron-requiring processes, such as synthesis and/or repair of Fe-S clusters in biosynthetic enzymes.</text>
</comment>
<comment type="similarity">
    <text evidence="1">Belongs to the Fe(2+)-trafficking protein family.</text>
</comment>
<protein>
    <recommendedName>
        <fullName evidence="1">Probable Fe(2+)-trafficking protein</fullName>
    </recommendedName>
</protein>